<sequence length="363" mass="38199">MGLRTSPLHGRHEDRGASFTEFGGWNMPVDFDGIQAEHAAVREAAGIFDVSHMGEIEVSGPDAERLMQRLTTNDVSRLDPGDAQYAAITDDDGIMIDDTVVYRTPADWPGAFLFVPNAGHDAAAFDRWTDHRDAHDLDASVDNVTTDYGMVAVQGPDAPDLVAARAGDGVHDLGRFEAATVGVAGVECLVANTGYTGEAGVEIVFPADGAGAVWDAIANDCQPCGLGARDTLRMEHGFLLSGQDFDPEENPRTPFEAGIGFAVAPESGFVGRDALADTDSPEQQFVGLTLDERGVPRHGYAVTTPAGDEIGTVTSGTMSPTLGEPIGLGYVDSAHAADGTTVAVRIRGTDKQATITTPPFLDQ</sequence>
<organism>
    <name type="scientific">Halobacterium salinarum (strain ATCC 29341 / DSM 671 / R1)</name>
    <dbReference type="NCBI Taxonomy" id="478009"/>
    <lineage>
        <taxon>Archaea</taxon>
        <taxon>Methanobacteriati</taxon>
        <taxon>Methanobacteriota</taxon>
        <taxon>Stenosarchaea group</taxon>
        <taxon>Halobacteria</taxon>
        <taxon>Halobacteriales</taxon>
        <taxon>Halobacteriaceae</taxon>
        <taxon>Halobacterium</taxon>
        <taxon>Halobacterium salinarum NRC-34001</taxon>
    </lineage>
</organism>
<reference key="1">
    <citation type="journal article" date="2008" name="Genomics">
        <title>Evolution in the laboratory: the genome of Halobacterium salinarum strain R1 compared to that of strain NRC-1.</title>
        <authorList>
            <person name="Pfeiffer F."/>
            <person name="Schuster S.C."/>
            <person name="Broicher A."/>
            <person name="Falb M."/>
            <person name="Palm P."/>
            <person name="Rodewald K."/>
            <person name="Ruepp A."/>
            <person name="Soppa J."/>
            <person name="Tittor J."/>
            <person name="Oesterhelt D."/>
        </authorList>
    </citation>
    <scope>NUCLEOTIDE SEQUENCE [LARGE SCALE GENOMIC DNA]</scope>
    <source>
        <strain>ATCC 29341 / DSM 671 / R1</strain>
    </source>
</reference>
<comment type="function">
    <text evidence="1">The glycine cleavage system catalyzes the degradation of glycine.</text>
</comment>
<comment type="catalytic activity">
    <reaction evidence="1">
        <text>N(6)-[(R)-S(8)-aminomethyldihydrolipoyl]-L-lysyl-[protein] + (6S)-5,6,7,8-tetrahydrofolate = N(6)-[(R)-dihydrolipoyl]-L-lysyl-[protein] + (6R)-5,10-methylene-5,6,7,8-tetrahydrofolate + NH4(+)</text>
        <dbReference type="Rhea" id="RHEA:16945"/>
        <dbReference type="Rhea" id="RHEA-COMP:10475"/>
        <dbReference type="Rhea" id="RHEA-COMP:10492"/>
        <dbReference type="ChEBI" id="CHEBI:15636"/>
        <dbReference type="ChEBI" id="CHEBI:28938"/>
        <dbReference type="ChEBI" id="CHEBI:57453"/>
        <dbReference type="ChEBI" id="CHEBI:83100"/>
        <dbReference type="ChEBI" id="CHEBI:83143"/>
        <dbReference type="EC" id="2.1.2.10"/>
    </reaction>
</comment>
<comment type="subunit">
    <text evidence="1">The glycine cleavage system is composed of four proteins: P, T, L and H.</text>
</comment>
<comment type="similarity">
    <text evidence="1">Belongs to the GcvT family.</text>
</comment>
<name>GCST_HALS3</name>
<accession>B0R5Y8</accession>
<feature type="chain" id="PRO_1000114098" description="Probable aminomethyltransferase">
    <location>
        <begin position="1"/>
        <end position="363"/>
    </location>
</feature>
<dbReference type="EC" id="2.1.2.10" evidence="1"/>
<dbReference type="EMBL" id="AM774415">
    <property type="protein sequence ID" value="CAP14157.1"/>
    <property type="molecule type" value="Genomic_DNA"/>
</dbReference>
<dbReference type="RefSeq" id="WP_010903168.1">
    <property type="nucleotide sequence ID" value="NC_010364.1"/>
</dbReference>
<dbReference type="SMR" id="B0R5Y8"/>
<dbReference type="EnsemblBacteria" id="CAP14157">
    <property type="protein sequence ID" value="CAP14157"/>
    <property type="gene ID" value="OE_3278R"/>
</dbReference>
<dbReference type="GeneID" id="68694284"/>
<dbReference type="KEGG" id="hsl:OE_3278R"/>
<dbReference type="HOGENOM" id="CLU_007884_10_2_2"/>
<dbReference type="PhylomeDB" id="B0R5Y8"/>
<dbReference type="Proteomes" id="UP000001321">
    <property type="component" value="Chromosome"/>
</dbReference>
<dbReference type="GO" id="GO:0005960">
    <property type="term" value="C:glycine cleavage complex"/>
    <property type="evidence" value="ECO:0007669"/>
    <property type="project" value="InterPro"/>
</dbReference>
<dbReference type="GO" id="GO:0004047">
    <property type="term" value="F:aminomethyltransferase activity"/>
    <property type="evidence" value="ECO:0007669"/>
    <property type="project" value="UniProtKB-UniRule"/>
</dbReference>
<dbReference type="GO" id="GO:0008483">
    <property type="term" value="F:transaminase activity"/>
    <property type="evidence" value="ECO:0007669"/>
    <property type="project" value="UniProtKB-KW"/>
</dbReference>
<dbReference type="GO" id="GO:0019464">
    <property type="term" value="P:glycine decarboxylation via glycine cleavage system"/>
    <property type="evidence" value="ECO:0007669"/>
    <property type="project" value="UniProtKB-UniRule"/>
</dbReference>
<dbReference type="FunFam" id="2.40.30.110:FF:000003">
    <property type="entry name" value="Aminomethyltransferase"/>
    <property type="match status" value="1"/>
</dbReference>
<dbReference type="Gene3D" id="3.30.1360.120">
    <property type="entry name" value="Probable tRNA modification gtpase trme, domain 1"/>
    <property type="match status" value="1"/>
</dbReference>
<dbReference type="HAMAP" id="MF_00259">
    <property type="entry name" value="GcvT"/>
    <property type="match status" value="1"/>
</dbReference>
<dbReference type="InterPro" id="IPR006223">
    <property type="entry name" value="GCS_T"/>
</dbReference>
<dbReference type="InterPro" id="IPR022903">
    <property type="entry name" value="GCS_T_bac"/>
</dbReference>
<dbReference type="InterPro" id="IPR013977">
    <property type="entry name" value="GCST_C"/>
</dbReference>
<dbReference type="InterPro" id="IPR006222">
    <property type="entry name" value="GCV_T_N"/>
</dbReference>
<dbReference type="InterPro" id="IPR028896">
    <property type="entry name" value="GcvT/YgfZ/DmdA"/>
</dbReference>
<dbReference type="InterPro" id="IPR029043">
    <property type="entry name" value="GcvT/YgfZ_C"/>
</dbReference>
<dbReference type="InterPro" id="IPR027266">
    <property type="entry name" value="TrmE/GcvT_dom1"/>
</dbReference>
<dbReference type="NCBIfam" id="TIGR00528">
    <property type="entry name" value="gcvT"/>
    <property type="match status" value="1"/>
</dbReference>
<dbReference type="NCBIfam" id="NF001567">
    <property type="entry name" value="PRK00389.1"/>
    <property type="match status" value="1"/>
</dbReference>
<dbReference type="PANTHER" id="PTHR43757">
    <property type="entry name" value="AMINOMETHYLTRANSFERASE"/>
    <property type="match status" value="1"/>
</dbReference>
<dbReference type="PANTHER" id="PTHR43757:SF2">
    <property type="entry name" value="AMINOMETHYLTRANSFERASE, MITOCHONDRIAL"/>
    <property type="match status" value="1"/>
</dbReference>
<dbReference type="Pfam" id="PF01571">
    <property type="entry name" value="GCV_T"/>
    <property type="match status" value="1"/>
</dbReference>
<dbReference type="Pfam" id="PF08669">
    <property type="entry name" value="GCV_T_C"/>
    <property type="match status" value="1"/>
</dbReference>
<dbReference type="PIRSF" id="PIRSF006487">
    <property type="entry name" value="GcvT"/>
    <property type="match status" value="1"/>
</dbReference>
<dbReference type="SUPFAM" id="SSF101790">
    <property type="entry name" value="Aminomethyltransferase beta-barrel domain"/>
    <property type="match status" value="1"/>
</dbReference>
<dbReference type="SUPFAM" id="SSF103025">
    <property type="entry name" value="Folate-binding domain"/>
    <property type="match status" value="1"/>
</dbReference>
<gene>
    <name evidence="1" type="primary">gcvT</name>
    <name type="ordered locus">OE_3278R</name>
</gene>
<protein>
    <recommendedName>
        <fullName evidence="1">Probable aminomethyltransferase</fullName>
        <ecNumber evidence="1">2.1.2.10</ecNumber>
    </recommendedName>
    <alternativeName>
        <fullName evidence="1">Glycine cleavage system T protein</fullName>
    </alternativeName>
</protein>
<proteinExistence type="inferred from homology"/>
<keyword id="KW-0032">Aminotransferase</keyword>
<keyword id="KW-0808">Transferase</keyword>
<evidence type="ECO:0000255" key="1">
    <source>
        <dbReference type="HAMAP-Rule" id="MF_00259"/>
    </source>
</evidence>